<organism>
    <name type="scientific">Yersinia pestis bv. Antiqua (strain Angola)</name>
    <dbReference type="NCBI Taxonomy" id="349746"/>
    <lineage>
        <taxon>Bacteria</taxon>
        <taxon>Pseudomonadati</taxon>
        <taxon>Pseudomonadota</taxon>
        <taxon>Gammaproteobacteria</taxon>
        <taxon>Enterobacterales</taxon>
        <taxon>Yersiniaceae</taxon>
        <taxon>Yersinia</taxon>
    </lineage>
</organism>
<name>HEM1_YERPG</name>
<reference key="1">
    <citation type="journal article" date="2010" name="J. Bacteriol.">
        <title>Genome sequence of the deep-rooted Yersinia pestis strain Angola reveals new insights into the evolution and pangenome of the plague bacterium.</title>
        <authorList>
            <person name="Eppinger M."/>
            <person name="Worsham P.L."/>
            <person name="Nikolich M.P."/>
            <person name="Riley D.R."/>
            <person name="Sebastian Y."/>
            <person name="Mou S."/>
            <person name="Achtman M."/>
            <person name="Lindler L.E."/>
            <person name="Ravel J."/>
        </authorList>
    </citation>
    <scope>NUCLEOTIDE SEQUENCE [LARGE SCALE GENOMIC DNA]</scope>
    <source>
        <strain>Angola</strain>
    </source>
</reference>
<dbReference type="EC" id="1.2.1.70" evidence="1"/>
<dbReference type="EMBL" id="CP000901">
    <property type="protein sequence ID" value="ABX86788.1"/>
    <property type="molecule type" value="Genomic_DNA"/>
</dbReference>
<dbReference type="RefSeq" id="WP_002211237.1">
    <property type="nucleotide sequence ID" value="NZ_CP009935.1"/>
</dbReference>
<dbReference type="SMR" id="A9QZ09"/>
<dbReference type="GeneID" id="57976645"/>
<dbReference type="KEGG" id="ypg:YpAngola_A2461"/>
<dbReference type="PATRIC" id="fig|349746.12.peg.3479"/>
<dbReference type="UniPathway" id="UPA00251">
    <property type="reaction ID" value="UER00316"/>
</dbReference>
<dbReference type="GO" id="GO:0008883">
    <property type="term" value="F:glutamyl-tRNA reductase activity"/>
    <property type="evidence" value="ECO:0007669"/>
    <property type="project" value="UniProtKB-UniRule"/>
</dbReference>
<dbReference type="GO" id="GO:0050661">
    <property type="term" value="F:NADP binding"/>
    <property type="evidence" value="ECO:0007669"/>
    <property type="project" value="InterPro"/>
</dbReference>
<dbReference type="GO" id="GO:0019353">
    <property type="term" value="P:protoporphyrinogen IX biosynthetic process from glutamate"/>
    <property type="evidence" value="ECO:0007669"/>
    <property type="project" value="TreeGrafter"/>
</dbReference>
<dbReference type="CDD" id="cd05213">
    <property type="entry name" value="NAD_bind_Glutamyl_tRNA_reduct"/>
    <property type="match status" value="1"/>
</dbReference>
<dbReference type="FunFam" id="3.30.460.30:FF:000001">
    <property type="entry name" value="Glutamyl-tRNA reductase"/>
    <property type="match status" value="1"/>
</dbReference>
<dbReference type="FunFam" id="3.40.50.720:FF:000031">
    <property type="entry name" value="Glutamyl-tRNA reductase"/>
    <property type="match status" value="1"/>
</dbReference>
<dbReference type="Gene3D" id="3.30.460.30">
    <property type="entry name" value="Glutamyl-tRNA reductase, N-terminal domain"/>
    <property type="match status" value="1"/>
</dbReference>
<dbReference type="Gene3D" id="3.40.50.720">
    <property type="entry name" value="NAD(P)-binding Rossmann-like Domain"/>
    <property type="match status" value="1"/>
</dbReference>
<dbReference type="HAMAP" id="MF_00087">
    <property type="entry name" value="Glu_tRNA_reductase"/>
    <property type="match status" value="1"/>
</dbReference>
<dbReference type="InterPro" id="IPR000343">
    <property type="entry name" value="4pyrrol_synth_GluRdtase"/>
</dbReference>
<dbReference type="InterPro" id="IPR015896">
    <property type="entry name" value="4pyrrol_synth_GluRdtase_dimer"/>
</dbReference>
<dbReference type="InterPro" id="IPR015895">
    <property type="entry name" value="4pyrrol_synth_GluRdtase_N"/>
</dbReference>
<dbReference type="InterPro" id="IPR018214">
    <property type="entry name" value="GluRdtase_CS"/>
</dbReference>
<dbReference type="InterPro" id="IPR036453">
    <property type="entry name" value="GluRdtase_dimer_dom_sf"/>
</dbReference>
<dbReference type="InterPro" id="IPR036343">
    <property type="entry name" value="GluRdtase_N_sf"/>
</dbReference>
<dbReference type="InterPro" id="IPR036291">
    <property type="entry name" value="NAD(P)-bd_dom_sf"/>
</dbReference>
<dbReference type="InterPro" id="IPR006151">
    <property type="entry name" value="Shikm_DH/Glu-tRNA_Rdtase"/>
</dbReference>
<dbReference type="NCBIfam" id="TIGR01035">
    <property type="entry name" value="hemA"/>
    <property type="match status" value="1"/>
</dbReference>
<dbReference type="PANTHER" id="PTHR43013">
    <property type="entry name" value="GLUTAMYL-TRNA REDUCTASE"/>
    <property type="match status" value="1"/>
</dbReference>
<dbReference type="PANTHER" id="PTHR43013:SF1">
    <property type="entry name" value="GLUTAMYL-TRNA REDUCTASE"/>
    <property type="match status" value="1"/>
</dbReference>
<dbReference type="Pfam" id="PF00745">
    <property type="entry name" value="GlutR_dimer"/>
    <property type="match status" value="1"/>
</dbReference>
<dbReference type="Pfam" id="PF05201">
    <property type="entry name" value="GlutR_N"/>
    <property type="match status" value="1"/>
</dbReference>
<dbReference type="Pfam" id="PF01488">
    <property type="entry name" value="Shikimate_DH"/>
    <property type="match status" value="1"/>
</dbReference>
<dbReference type="PIRSF" id="PIRSF000445">
    <property type="entry name" value="4pyrrol_synth_GluRdtase"/>
    <property type="match status" value="1"/>
</dbReference>
<dbReference type="SUPFAM" id="SSF69742">
    <property type="entry name" value="Glutamyl tRNA-reductase catalytic, N-terminal domain"/>
    <property type="match status" value="1"/>
</dbReference>
<dbReference type="SUPFAM" id="SSF69075">
    <property type="entry name" value="Glutamyl tRNA-reductase dimerization domain"/>
    <property type="match status" value="1"/>
</dbReference>
<dbReference type="SUPFAM" id="SSF51735">
    <property type="entry name" value="NAD(P)-binding Rossmann-fold domains"/>
    <property type="match status" value="1"/>
</dbReference>
<dbReference type="PROSITE" id="PS00747">
    <property type="entry name" value="GLUTR"/>
    <property type="match status" value="1"/>
</dbReference>
<comment type="function">
    <text evidence="1">Catalyzes the NADPH-dependent reduction of glutamyl-tRNA(Glu) to glutamate 1-semialdehyde (GSA).</text>
</comment>
<comment type="catalytic activity">
    <reaction evidence="1">
        <text>(S)-4-amino-5-oxopentanoate + tRNA(Glu) + NADP(+) = L-glutamyl-tRNA(Glu) + NADPH + H(+)</text>
        <dbReference type="Rhea" id="RHEA:12344"/>
        <dbReference type="Rhea" id="RHEA-COMP:9663"/>
        <dbReference type="Rhea" id="RHEA-COMP:9680"/>
        <dbReference type="ChEBI" id="CHEBI:15378"/>
        <dbReference type="ChEBI" id="CHEBI:57501"/>
        <dbReference type="ChEBI" id="CHEBI:57783"/>
        <dbReference type="ChEBI" id="CHEBI:58349"/>
        <dbReference type="ChEBI" id="CHEBI:78442"/>
        <dbReference type="ChEBI" id="CHEBI:78520"/>
        <dbReference type="EC" id="1.2.1.70"/>
    </reaction>
</comment>
<comment type="pathway">
    <text evidence="1">Porphyrin-containing compound metabolism; protoporphyrin-IX biosynthesis; 5-aminolevulinate from L-glutamyl-tRNA(Glu): step 1/2.</text>
</comment>
<comment type="subunit">
    <text evidence="1">Homodimer.</text>
</comment>
<comment type="domain">
    <text evidence="1">Possesses an unusual extended V-shaped dimeric structure with each monomer consisting of three distinct domains arranged along a curved 'spinal' alpha-helix. The N-terminal catalytic domain specifically recognizes the glutamate moiety of the substrate. The second domain is the NADPH-binding domain, and the third C-terminal domain is responsible for dimerization.</text>
</comment>
<comment type="miscellaneous">
    <text evidence="1">During catalysis, the active site Cys acts as a nucleophile attacking the alpha-carbonyl group of tRNA-bound glutamate with the formation of a thioester intermediate between enzyme and glutamate, and the concomitant release of tRNA(Glu). The thioester intermediate is finally reduced by direct hydride transfer from NADPH, to form the product GSA.</text>
</comment>
<comment type="similarity">
    <text evidence="1">Belongs to the glutamyl-tRNA reductase family.</text>
</comment>
<protein>
    <recommendedName>
        <fullName evidence="1">Glutamyl-tRNA reductase</fullName>
        <shortName evidence="1">GluTR</shortName>
        <ecNumber evidence="1">1.2.1.70</ecNumber>
    </recommendedName>
</protein>
<evidence type="ECO:0000255" key="1">
    <source>
        <dbReference type="HAMAP-Rule" id="MF_00087"/>
    </source>
</evidence>
<keyword id="KW-0521">NADP</keyword>
<keyword id="KW-0560">Oxidoreductase</keyword>
<keyword id="KW-0627">Porphyrin biosynthesis</keyword>
<gene>
    <name evidence="1" type="primary">hemA</name>
    <name type="ordered locus">YpAngola_A2461</name>
</gene>
<feature type="chain" id="PRO_1000093181" description="Glutamyl-tRNA reductase">
    <location>
        <begin position="1"/>
        <end position="420"/>
    </location>
</feature>
<feature type="active site" description="Nucleophile" evidence="1">
    <location>
        <position position="50"/>
    </location>
</feature>
<feature type="binding site" evidence="1">
    <location>
        <begin position="49"/>
        <end position="52"/>
    </location>
    <ligand>
        <name>substrate</name>
    </ligand>
</feature>
<feature type="binding site" evidence="1">
    <location>
        <position position="109"/>
    </location>
    <ligand>
        <name>substrate</name>
    </ligand>
</feature>
<feature type="binding site" evidence="1">
    <location>
        <begin position="114"/>
        <end position="116"/>
    </location>
    <ligand>
        <name>substrate</name>
    </ligand>
</feature>
<feature type="binding site" evidence="1">
    <location>
        <position position="120"/>
    </location>
    <ligand>
        <name>substrate</name>
    </ligand>
</feature>
<feature type="binding site" evidence="1">
    <location>
        <begin position="189"/>
        <end position="194"/>
    </location>
    <ligand>
        <name>NADP(+)</name>
        <dbReference type="ChEBI" id="CHEBI:58349"/>
    </ligand>
</feature>
<feature type="site" description="Important for activity" evidence="1">
    <location>
        <position position="99"/>
    </location>
</feature>
<proteinExistence type="inferred from homology"/>
<sequence>MTLLALGINHKTAPVSLRERVTFSPESMDQALNSLLQQPLVQGGVVLSTCNRTELYLSVEQQENLHEQLTAWLCNYHKLSPDDVRQSLYWHHGNDAVRHLMRVASGLDSQVLGEPQILGQVKKAFAESQRGQSLSSELERLFQKSFSVAKRVRTETEIGASAVSVAFAACSLARQIFESLSELHVLLVGAGETIELVARHLREHQVKHMIIANRTRERAQSLASEVGAEVITLPEIDARLADADIIISSTASPLPIIGKGMVERALKTRRNQPMLFIDIAVPRDIEPEVGKLSNAYLYSVDDLQAIIQHNMAQRQAAAVQAESIVQQESMNFMTWLRAQGAVETIRDYRSQAEQVRSEMTAKALVAIEQGANVEQVINELAYKLTNRLIHAPTKSLQQAASDGDMERLQLLRDSLGLDQH</sequence>
<accession>A9QZ09</accession>